<keyword id="KW-0903">Direct protein sequencing</keyword>
<keyword id="KW-1015">Disulfide bond</keyword>
<keyword id="KW-0272">Extracellular matrix</keyword>
<keyword id="KW-0430">Lectin</keyword>
<keyword id="KW-0597">Phosphoprotein</keyword>
<keyword id="KW-0964">Secreted</keyword>
<evidence type="ECO:0000250" key="1">
    <source>
        <dbReference type="UniProtKB" id="Q9PRS8"/>
    </source>
</evidence>
<evidence type="ECO:0000255" key="2">
    <source>
        <dbReference type="PROSITE-ProRule" id="PRU00040"/>
    </source>
</evidence>
<evidence type="ECO:0000269" key="3">
    <source>
    </source>
</evidence>
<evidence type="ECO:0000305" key="4"/>
<comment type="subcellular location">
    <subcellularLocation>
        <location evidence="3">Secreted</location>
        <location evidence="3">Extracellular space</location>
        <location evidence="3">Extracellular matrix</location>
    </subcellularLocation>
    <text>Eggshell matrix.</text>
</comment>
<comment type="mass spectrometry" mass="16834.1" error="2.0" method="Electrospray" evidence="3"/>
<sequence length="142" mass="16601">RERAGCAKGWIPFDGRCYGFFPQELSWRRAEGFCQRLGARTHLASIHSEEEHQAIVSMLASSQPYSDSEEEAGEEVWIGLHRPLGRRNWEWSDGTKLDYGSWYRDVFLRRRACVALEDTTDFATWDVELCSDRKPFICEYRT</sequence>
<organism evidence="4">
    <name type="scientific">Struthio camelus</name>
    <name type="common">Common ostrich</name>
    <dbReference type="NCBI Taxonomy" id="8801"/>
    <lineage>
        <taxon>Eukaryota</taxon>
        <taxon>Metazoa</taxon>
        <taxon>Chordata</taxon>
        <taxon>Craniata</taxon>
        <taxon>Vertebrata</taxon>
        <taxon>Euteleostomi</taxon>
        <taxon>Archelosauria</taxon>
        <taxon>Archosauria</taxon>
        <taxon>Dinosauria</taxon>
        <taxon>Saurischia</taxon>
        <taxon>Theropoda</taxon>
        <taxon>Coelurosauria</taxon>
        <taxon>Aves</taxon>
        <taxon>Palaeognathae</taxon>
        <taxon>Struthioniformes</taxon>
        <taxon>Struthionidae</taxon>
        <taxon>Struthio</taxon>
    </lineage>
</organism>
<dbReference type="SMR" id="P83515"/>
<dbReference type="iPTMnet" id="P83515"/>
<dbReference type="GO" id="GO:0005576">
    <property type="term" value="C:extracellular region"/>
    <property type="evidence" value="ECO:0007669"/>
    <property type="project" value="UniProtKB-KW"/>
</dbReference>
<dbReference type="GO" id="GO:0030246">
    <property type="term" value="F:carbohydrate binding"/>
    <property type="evidence" value="ECO:0007669"/>
    <property type="project" value="UniProtKB-KW"/>
</dbReference>
<dbReference type="CDD" id="cd03594">
    <property type="entry name" value="CLECT_REG-1_like"/>
    <property type="match status" value="1"/>
</dbReference>
<dbReference type="FunFam" id="3.10.100.10:FF:000087">
    <property type="entry name" value="Snaclec rhodocetin subunit delta"/>
    <property type="match status" value="1"/>
</dbReference>
<dbReference type="Gene3D" id="3.10.100.10">
    <property type="entry name" value="Mannose-Binding Protein A, subunit A"/>
    <property type="match status" value="1"/>
</dbReference>
<dbReference type="InterPro" id="IPR001304">
    <property type="entry name" value="C-type_lectin-like"/>
</dbReference>
<dbReference type="InterPro" id="IPR016186">
    <property type="entry name" value="C-type_lectin-like/link_sf"/>
</dbReference>
<dbReference type="InterPro" id="IPR050111">
    <property type="entry name" value="C-type_lectin/snaclec_domain"/>
</dbReference>
<dbReference type="InterPro" id="IPR016187">
    <property type="entry name" value="CTDL_fold"/>
</dbReference>
<dbReference type="PANTHER" id="PTHR22803">
    <property type="entry name" value="MANNOSE, PHOSPHOLIPASE, LECTIN RECEPTOR RELATED"/>
    <property type="match status" value="1"/>
</dbReference>
<dbReference type="Pfam" id="PF00059">
    <property type="entry name" value="Lectin_C"/>
    <property type="match status" value="1"/>
</dbReference>
<dbReference type="SMART" id="SM00034">
    <property type="entry name" value="CLECT"/>
    <property type="match status" value="1"/>
</dbReference>
<dbReference type="SUPFAM" id="SSF56436">
    <property type="entry name" value="C-type lectin-like"/>
    <property type="match status" value="1"/>
</dbReference>
<dbReference type="PROSITE" id="PS50041">
    <property type="entry name" value="C_TYPE_LECTIN_2"/>
    <property type="match status" value="1"/>
</dbReference>
<name>SCAL2_STRCA</name>
<accession>P83515</accession>
<protein>
    <recommendedName>
        <fullName>Struthiocalcin-2</fullName>
        <shortName>SCA-2</shortName>
    </recommendedName>
</protein>
<proteinExistence type="evidence at protein level"/>
<feature type="chain" id="PRO_0000046721" description="Struthiocalcin-2">
    <location>
        <begin position="1"/>
        <end position="142"/>
    </location>
</feature>
<feature type="domain" description="C-type lectin" evidence="2 4">
    <location>
        <begin position="13"/>
        <end position="139"/>
    </location>
</feature>
<feature type="modified residue" description="Phosphoserine" evidence="3">
    <location>
        <position position="62"/>
    </location>
</feature>
<feature type="modified residue" description="Phosphoserine" evidence="3">
    <location>
        <position position="66"/>
    </location>
</feature>
<feature type="modified residue" description="Phosphoserine" evidence="3">
    <location>
        <position position="68"/>
    </location>
</feature>
<feature type="disulfide bond" evidence="1 2">
    <location>
        <begin position="6"/>
        <end position="17"/>
    </location>
</feature>
<feature type="disulfide bond" evidence="1 2">
    <location>
        <begin position="34"/>
        <end position="138"/>
    </location>
</feature>
<feature type="disulfide bond" evidence="1 2">
    <location>
        <begin position="113"/>
        <end position="130"/>
    </location>
</feature>
<reference evidence="4" key="1">
    <citation type="journal article" date="2004" name="Biochim. Biophys. Acta">
        <title>Ostrich (Struthio camelus) eggshell matrix contains two different C-type lectin-like proteins. Isolation, amino acid sequence, and posttranslational modifications.</title>
        <authorList>
            <person name="Mann K."/>
            <person name="Siedler F."/>
        </authorList>
    </citation>
    <scope>PROTEIN SEQUENCE</scope>
    <scope>SUBCELLULAR LOCATION</scope>
    <scope>PHOSPHORYLATION AT SER-62; SER-66 AND SER-68</scope>
    <scope>MASS SPECTROMETRY</scope>
    <source>
        <tissue evidence="3">Eggshell matrix</tissue>
    </source>
</reference>